<comment type="function">
    <text evidence="1">Plays an essential role in the initiation and regulation of chromosomal replication. ATP-DnaA binds to the origin of replication (oriC) to initiate formation of the DNA replication initiation complex once per cell cycle. Binds the DnaA box (a 9 base pair repeat at the origin) and separates the double-stranded (ds)DNA. Forms a right-handed helical filament on oriC DNA; dsDNA binds to the exterior of the filament while single-stranded (ss)DNA is stabiized in the filament's interior. The ATP-DnaA-oriC complex binds and stabilizes one strand of the AT-rich DNA unwinding element (DUE), permitting loading of DNA polymerase. After initiation quickly degrades to an ADP-DnaA complex that is not apt for DNA replication. Binds acidic phospholipids.</text>
</comment>
<comment type="subunit">
    <text evidence="1">Oligomerizes as a right-handed, spiral filament on DNA at oriC.</text>
</comment>
<comment type="subcellular location">
    <subcellularLocation>
        <location evidence="1">Cytoplasm</location>
    </subcellularLocation>
</comment>
<comment type="domain">
    <text evidence="1">Domain I is involved in oligomerization and binding regulators, domain II is flexibile and of varying length in different bacteria, domain III forms the AAA+ region, while domain IV binds dsDNA.</text>
</comment>
<comment type="similarity">
    <text evidence="1">Belongs to the DnaA family.</text>
</comment>
<organism>
    <name type="scientific">Sodalis glossinidius (strain morsitans)</name>
    <dbReference type="NCBI Taxonomy" id="343509"/>
    <lineage>
        <taxon>Bacteria</taxon>
        <taxon>Pseudomonadati</taxon>
        <taxon>Pseudomonadota</taxon>
        <taxon>Gammaproteobacteria</taxon>
        <taxon>Enterobacterales</taxon>
        <taxon>Bruguierivoracaceae</taxon>
        <taxon>Sodalis</taxon>
    </lineage>
</organism>
<gene>
    <name evidence="1" type="primary">dnaA</name>
    <name type="ordered locus">SG0001</name>
</gene>
<evidence type="ECO:0000255" key="1">
    <source>
        <dbReference type="HAMAP-Rule" id="MF_00377"/>
    </source>
</evidence>
<evidence type="ECO:0000256" key="2">
    <source>
        <dbReference type="SAM" id="MobiDB-lite"/>
    </source>
</evidence>
<name>DNAA_SODGM</name>
<accession>Q2NX49</accession>
<dbReference type="EMBL" id="AP008232">
    <property type="protein sequence ID" value="BAE73276.1"/>
    <property type="molecule type" value="Genomic_DNA"/>
</dbReference>
<dbReference type="RefSeq" id="WP_011409866.1">
    <property type="nucleotide sequence ID" value="NC_007712.1"/>
</dbReference>
<dbReference type="SMR" id="Q2NX49"/>
<dbReference type="STRING" id="343509.SG0001"/>
<dbReference type="KEGG" id="sgl:SG0001"/>
<dbReference type="eggNOG" id="COG0593">
    <property type="taxonomic scope" value="Bacteria"/>
</dbReference>
<dbReference type="HOGENOM" id="CLU_026910_0_1_6"/>
<dbReference type="OrthoDB" id="9807019at2"/>
<dbReference type="BioCyc" id="SGLO343509:SGP1_RS00005-MONOMER"/>
<dbReference type="Proteomes" id="UP000001932">
    <property type="component" value="Chromosome"/>
</dbReference>
<dbReference type="GO" id="GO:0005737">
    <property type="term" value="C:cytoplasm"/>
    <property type="evidence" value="ECO:0007669"/>
    <property type="project" value="UniProtKB-SubCell"/>
</dbReference>
<dbReference type="GO" id="GO:0005886">
    <property type="term" value="C:plasma membrane"/>
    <property type="evidence" value="ECO:0007669"/>
    <property type="project" value="TreeGrafter"/>
</dbReference>
<dbReference type="GO" id="GO:0005524">
    <property type="term" value="F:ATP binding"/>
    <property type="evidence" value="ECO:0007669"/>
    <property type="project" value="UniProtKB-UniRule"/>
</dbReference>
<dbReference type="GO" id="GO:0016887">
    <property type="term" value="F:ATP hydrolysis activity"/>
    <property type="evidence" value="ECO:0007669"/>
    <property type="project" value="InterPro"/>
</dbReference>
<dbReference type="GO" id="GO:0003688">
    <property type="term" value="F:DNA replication origin binding"/>
    <property type="evidence" value="ECO:0007669"/>
    <property type="project" value="UniProtKB-UniRule"/>
</dbReference>
<dbReference type="GO" id="GO:0008289">
    <property type="term" value="F:lipid binding"/>
    <property type="evidence" value="ECO:0007669"/>
    <property type="project" value="UniProtKB-KW"/>
</dbReference>
<dbReference type="GO" id="GO:0006270">
    <property type="term" value="P:DNA replication initiation"/>
    <property type="evidence" value="ECO:0007669"/>
    <property type="project" value="UniProtKB-UniRule"/>
</dbReference>
<dbReference type="GO" id="GO:0006275">
    <property type="term" value="P:regulation of DNA replication"/>
    <property type="evidence" value="ECO:0007669"/>
    <property type="project" value="UniProtKB-UniRule"/>
</dbReference>
<dbReference type="CDD" id="cd00009">
    <property type="entry name" value="AAA"/>
    <property type="match status" value="1"/>
</dbReference>
<dbReference type="CDD" id="cd06571">
    <property type="entry name" value="Bac_DnaA_C"/>
    <property type="match status" value="1"/>
</dbReference>
<dbReference type="FunFam" id="1.10.1750.10:FF:000001">
    <property type="entry name" value="Chromosomal replication initiator protein DnaA"/>
    <property type="match status" value="1"/>
</dbReference>
<dbReference type="FunFam" id="1.10.8.60:FF:000003">
    <property type="entry name" value="Chromosomal replication initiator protein DnaA"/>
    <property type="match status" value="1"/>
</dbReference>
<dbReference type="FunFam" id="3.30.300.180:FF:000001">
    <property type="entry name" value="Chromosomal replication initiator protein DnaA"/>
    <property type="match status" value="1"/>
</dbReference>
<dbReference type="FunFam" id="3.40.50.300:FF:000103">
    <property type="entry name" value="Chromosomal replication initiator protein DnaA"/>
    <property type="match status" value="1"/>
</dbReference>
<dbReference type="Gene3D" id="1.10.1750.10">
    <property type="match status" value="1"/>
</dbReference>
<dbReference type="Gene3D" id="1.10.8.60">
    <property type="match status" value="1"/>
</dbReference>
<dbReference type="Gene3D" id="3.30.300.180">
    <property type="match status" value="1"/>
</dbReference>
<dbReference type="Gene3D" id="3.40.50.300">
    <property type="entry name" value="P-loop containing nucleotide triphosphate hydrolases"/>
    <property type="match status" value="1"/>
</dbReference>
<dbReference type="HAMAP" id="MF_00377">
    <property type="entry name" value="DnaA_bact"/>
    <property type="match status" value="1"/>
</dbReference>
<dbReference type="InterPro" id="IPR003593">
    <property type="entry name" value="AAA+_ATPase"/>
</dbReference>
<dbReference type="InterPro" id="IPR001957">
    <property type="entry name" value="Chromosome_initiator_DnaA"/>
</dbReference>
<dbReference type="InterPro" id="IPR020591">
    <property type="entry name" value="Chromosome_initiator_DnaA-like"/>
</dbReference>
<dbReference type="InterPro" id="IPR018312">
    <property type="entry name" value="Chromosome_initiator_DnaA_CS"/>
</dbReference>
<dbReference type="InterPro" id="IPR013159">
    <property type="entry name" value="DnaA_C"/>
</dbReference>
<dbReference type="InterPro" id="IPR013317">
    <property type="entry name" value="DnaA_dom"/>
</dbReference>
<dbReference type="InterPro" id="IPR024633">
    <property type="entry name" value="DnaA_N_dom"/>
</dbReference>
<dbReference type="InterPro" id="IPR038454">
    <property type="entry name" value="DnaA_N_sf"/>
</dbReference>
<dbReference type="InterPro" id="IPR027417">
    <property type="entry name" value="P-loop_NTPase"/>
</dbReference>
<dbReference type="InterPro" id="IPR010921">
    <property type="entry name" value="Trp_repressor/repl_initiator"/>
</dbReference>
<dbReference type="NCBIfam" id="TIGR00362">
    <property type="entry name" value="DnaA"/>
    <property type="match status" value="1"/>
</dbReference>
<dbReference type="PANTHER" id="PTHR30050">
    <property type="entry name" value="CHROMOSOMAL REPLICATION INITIATOR PROTEIN DNAA"/>
    <property type="match status" value="1"/>
</dbReference>
<dbReference type="PANTHER" id="PTHR30050:SF2">
    <property type="entry name" value="CHROMOSOMAL REPLICATION INITIATOR PROTEIN DNAA"/>
    <property type="match status" value="1"/>
</dbReference>
<dbReference type="Pfam" id="PF00308">
    <property type="entry name" value="Bac_DnaA"/>
    <property type="match status" value="1"/>
</dbReference>
<dbReference type="Pfam" id="PF08299">
    <property type="entry name" value="Bac_DnaA_C"/>
    <property type="match status" value="1"/>
</dbReference>
<dbReference type="Pfam" id="PF11638">
    <property type="entry name" value="DnaA_N"/>
    <property type="match status" value="1"/>
</dbReference>
<dbReference type="PRINTS" id="PR00051">
    <property type="entry name" value="DNAA"/>
</dbReference>
<dbReference type="SMART" id="SM00382">
    <property type="entry name" value="AAA"/>
    <property type="match status" value="1"/>
</dbReference>
<dbReference type="SMART" id="SM00760">
    <property type="entry name" value="Bac_DnaA_C"/>
    <property type="match status" value="1"/>
</dbReference>
<dbReference type="SUPFAM" id="SSF52540">
    <property type="entry name" value="P-loop containing nucleoside triphosphate hydrolases"/>
    <property type="match status" value="1"/>
</dbReference>
<dbReference type="SUPFAM" id="SSF48295">
    <property type="entry name" value="TrpR-like"/>
    <property type="match status" value="1"/>
</dbReference>
<dbReference type="PROSITE" id="PS01008">
    <property type="entry name" value="DNAA"/>
    <property type="match status" value="1"/>
</dbReference>
<sequence length="464" mass="52442">MSLSLWQQCLARLQDELPATEFSMWIRPLQAELSDNTLALYAPNRFVLDWVRDKYLNNINGLLNDFCGTDAPLLRFEVGSKPPQMAVLQPASQHASEAPSQAAVARPRPSRPSWDNAPVQPELSYRSNVNPKHNFDNFVEGKSNQLARAAARQVADNPGGAYNPLFLYGGTGLGKTHLLHAVGNGIMARKANAKVVYMHSERFVQDMVKALQNNAIEEFKRYYRSVDALLIDDIQFFANKERSQEEFFHTFNALLEGNQQIILTSDRYPKEINGVEDRLKSRFGWGLTVAIEPPELETRVAILMKKADENAIRLPGEVAFFIAKRLRSNVRELEGALNRVIANANFTGRAITIDFVREALRDLLALQEKLVTIDNIQKTVAEYYKIKVADLLSKRRSRSVARPRQMAMALSKELTNHSLPEIGDAFGGRDHTTVLHACRKIEQLREESHDIKEDFSNLIRTLSS</sequence>
<keyword id="KW-0067">ATP-binding</keyword>
<keyword id="KW-0963">Cytoplasm</keyword>
<keyword id="KW-0235">DNA replication</keyword>
<keyword id="KW-0238">DNA-binding</keyword>
<keyword id="KW-0446">Lipid-binding</keyword>
<keyword id="KW-0547">Nucleotide-binding</keyword>
<protein>
    <recommendedName>
        <fullName evidence="1">Chromosomal replication initiator protein DnaA</fullName>
    </recommendedName>
</protein>
<feature type="chain" id="PRO_1000048730" description="Chromosomal replication initiator protein DnaA">
    <location>
        <begin position="1"/>
        <end position="464"/>
    </location>
</feature>
<feature type="region of interest" description="Domain I, interacts with DnaA modulators" evidence="1">
    <location>
        <begin position="1"/>
        <end position="82"/>
    </location>
</feature>
<feature type="region of interest" description="Domain II" evidence="1">
    <location>
        <begin position="82"/>
        <end position="127"/>
    </location>
</feature>
<feature type="region of interest" description="Disordered" evidence="2">
    <location>
        <begin position="91"/>
        <end position="118"/>
    </location>
</feature>
<feature type="region of interest" description="Domain III, AAA+ region" evidence="1">
    <location>
        <begin position="128"/>
        <end position="344"/>
    </location>
</feature>
<feature type="region of interest" description="Domain IV, binds dsDNA" evidence="1">
    <location>
        <begin position="345"/>
        <end position="464"/>
    </location>
</feature>
<feature type="binding site" evidence="1">
    <location>
        <position position="172"/>
    </location>
    <ligand>
        <name>ATP</name>
        <dbReference type="ChEBI" id="CHEBI:30616"/>
    </ligand>
</feature>
<feature type="binding site" evidence="1">
    <location>
        <position position="174"/>
    </location>
    <ligand>
        <name>ATP</name>
        <dbReference type="ChEBI" id="CHEBI:30616"/>
    </ligand>
</feature>
<feature type="binding site" evidence="1">
    <location>
        <position position="175"/>
    </location>
    <ligand>
        <name>ATP</name>
        <dbReference type="ChEBI" id="CHEBI:30616"/>
    </ligand>
</feature>
<feature type="binding site" evidence="1">
    <location>
        <position position="176"/>
    </location>
    <ligand>
        <name>ATP</name>
        <dbReference type="ChEBI" id="CHEBI:30616"/>
    </ligand>
</feature>
<proteinExistence type="inferred from homology"/>
<reference key="1">
    <citation type="journal article" date="2006" name="Genome Res.">
        <title>Massive genome erosion and functional adaptations provide insights into the symbiotic lifestyle of Sodalis glossinidius in the tsetse host.</title>
        <authorList>
            <person name="Toh H."/>
            <person name="Weiss B.L."/>
            <person name="Perkin S.A.H."/>
            <person name="Yamashita A."/>
            <person name="Oshima K."/>
            <person name="Hattori M."/>
            <person name="Aksoy S."/>
        </authorList>
    </citation>
    <scope>NUCLEOTIDE SEQUENCE [LARGE SCALE GENOMIC DNA]</scope>
    <source>
        <strain>morsitans</strain>
    </source>
</reference>